<name>YO186_YEAST</name>
<protein>
    <recommendedName>
        <fullName>Putative uncharacterized protein YOR186W</fullName>
    </recommendedName>
</protein>
<organism>
    <name type="scientific">Saccharomyces cerevisiae (strain ATCC 204508 / S288c)</name>
    <name type="common">Baker's yeast</name>
    <dbReference type="NCBI Taxonomy" id="559292"/>
    <lineage>
        <taxon>Eukaryota</taxon>
        <taxon>Fungi</taxon>
        <taxon>Dikarya</taxon>
        <taxon>Ascomycota</taxon>
        <taxon>Saccharomycotina</taxon>
        <taxon>Saccharomycetes</taxon>
        <taxon>Saccharomycetales</taxon>
        <taxon>Saccharomycetaceae</taxon>
        <taxon>Saccharomyces</taxon>
    </lineage>
</organism>
<reference key="1">
    <citation type="journal article" date="1997" name="Nature">
        <title>The nucleotide sequence of Saccharomyces cerevisiae chromosome XV.</title>
        <authorList>
            <person name="Dujon B."/>
            <person name="Albermann K."/>
            <person name="Aldea M."/>
            <person name="Alexandraki D."/>
            <person name="Ansorge W."/>
            <person name="Arino J."/>
            <person name="Benes V."/>
            <person name="Bohn C."/>
            <person name="Bolotin-Fukuhara M."/>
            <person name="Bordonne R."/>
            <person name="Boyer J."/>
            <person name="Camasses A."/>
            <person name="Casamayor A."/>
            <person name="Casas C."/>
            <person name="Cheret G."/>
            <person name="Cziepluch C."/>
            <person name="Daignan-Fornier B."/>
            <person name="Dang V.-D."/>
            <person name="de Haan M."/>
            <person name="Delius H."/>
            <person name="Durand P."/>
            <person name="Fairhead C."/>
            <person name="Feldmann H."/>
            <person name="Gaillon L."/>
            <person name="Galisson F."/>
            <person name="Gamo F.-J."/>
            <person name="Gancedo C."/>
            <person name="Goffeau A."/>
            <person name="Goulding S.E."/>
            <person name="Grivell L.A."/>
            <person name="Habbig B."/>
            <person name="Hand N.J."/>
            <person name="Hani J."/>
            <person name="Hattenhorst U."/>
            <person name="Hebling U."/>
            <person name="Hernando Y."/>
            <person name="Herrero E."/>
            <person name="Heumann K."/>
            <person name="Hiesel R."/>
            <person name="Hilger F."/>
            <person name="Hofmann B."/>
            <person name="Hollenberg C.P."/>
            <person name="Hughes B."/>
            <person name="Jauniaux J.-C."/>
            <person name="Kalogeropoulos A."/>
            <person name="Katsoulou C."/>
            <person name="Kordes E."/>
            <person name="Lafuente M.J."/>
            <person name="Landt O."/>
            <person name="Louis E.J."/>
            <person name="Maarse A.C."/>
            <person name="Madania A."/>
            <person name="Mannhaupt G."/>
            <person name="Marck C."/>
            <person name="Martin R.P."/>
            <person name="Mewes H.-W."/>
            <person name="Michaux G."/>
            <person name="Paces V."/>
            <person name="Parle-McDermott A.G."/>
            <person name="Pearson B.M."/>
            <person name="Perrin A."/>
            <person name="Pettersson B."/>
            <person name="Poch O."/>
            <person name="Pohl T.M."/>
            <person name="Poirey R."/>
            <person name="Portetelle D."/>
            <person name="Pujol A."/>
            <person name="Purnelle B."/>
            <person name="Ramezani Rad M."/>
            <person name="Rechmann S."/>
            <person name="Schwager C."/>
            <person name="Schweizer M."/>
            <person name="Sor F."/>
            <person name="Sterky F."/>
            <person name="Tarassov I.A."/>
            <person name="Teodoru C."/>
            <person name="Tettelin H."/>
            <person name="Thierry A."/>
            <person name="Tobiasch E."/>
            <person name="Tzermia M."/>
            <person name="Uhlen M."/>
            <person name="Unseld M."/>
            <person name="Valens M."/>
            <person name="Vandenbol M."/>
            <person name="Vetter I."/>
            <person name="Vlcek C."/>
            <person name="Voet M."/>
            <person name="Volckaert G."/>
            <person name="Voss H."/>
            <person name="Wambutt R."/>
            <person name="Wedler H."/>
            <person name="Wiemann S."/>
            <person name="Winsor B."/>
            <person name="Wolfe K.H."/>
            <person name="Zollner A."/>
            <person name="Zumstein E."/>
            <person name="Kleine K."/>
        </authorList>
    </citation>
    <scope>NUCLEOTIDE SEQUENCE [LARGE SCALE GENOMIC DNA]</scope>
    <source>
        <strain>ATCC 204508 / S288c</strain>
    </source>
</reference>
<reference key="2">
    <citation type="journal article" date="2014" name="G3 (Bethesda)">
        <title>The reference genome sequence of Saccharomyces cerevisiae: Then and now.</title>
        <authorList>
            <person name="Engel S.R."/>
            <person name="Dietrich F.S."/>
            <person name="Fisk D.G."/>
            <person name="Binkley G."/>
            <person name="Balakrishnan R."/>
            <person name="Costanzo M.C."/>
            <person name="Dwight S.S."/>
            <person name="Hitz B.C."/>
            <person name="Karra K."/>
            <person name="Nash R.S."/>
            <person name="Weng S."/>
            <person name="Wong E.D."/>
            <person name="Lloyd P."/>
            <person name="Skrzypek M.S."/>
            <person name="Miyasato S.R."/>
            <person name="Simison M."/>
            <person name="Cherry J.M."/>
        </authorList>
    </citation>
    <scope>GENOME REANNOTATION</scope>
    <source>
        <strain>ATCC 204508 / S288c</strain>
    </source>
</reference>
<reference key="3">
    <citation type="journal article" date="2007" name="Genome Res.">
        <title>Approaching a complete repository of sequence-verified protein-encoding clones for Saccharomyces cerevisiae.</title>
        <authorList>
            <person name="Hu Y."/>
            <person name="Rolfs A."/>
            <person name="Bhullar B."/>
            <person name="Murthy T.V.S."/>
            <person name="Zhu C."/>
            <person name="Berger M.F."/>
            <person name="Camargo A.A."/>
            <person name="Kelley F."/>
            <person name="McCarron S."/>
            <person name="Jepson D."/>
            <person name="Richardson A."/>
            <person name="Raphael J."/>
            <person name="Moreira D."/>
            <person name="Taycher E."/>
            <person name="Zuo D."/>
            <person name="Mohr S."/>
            <person name="Kane M.F."/>
            <person name="Williamson J."/>
            <person name="Simpson A.J.G."/>
            <person name="Bulyk M.L."/>
            <person name="Harlow E."/>
            <person name="Marsischky G."/>
            <person name="Kolodner R.D."/>
            <person name="LaBaer J."/>
        </authorList>
    </citation>
    <scope>NUCLEOTIDE SEQUENCE [GENOMIC DNA]</scope>
    <source>
        <strain>ATCC 204508 / S288c</strain>
    </source>
</reference>
<dbReference type="EMBL" id="Z75094">
    <property type="protein sequence ID" value="CAA99395.1"/>
    <property type="molecule type" value="Genomic_DNA"/>
</dbReference>
<dbReference type="EMBL" id="AY692628">
    <property type="protein sequence ID" value="AAT92647.1"/>
    <property type="molecule type" value="Genomic_DNA"/>
</dbReference>
<dbReference type="EMBL" id="BK006948">
    <property type="protein sequence ID" value="DAA10958.1"/>
    <property type="molecule type" value="Genomic_DNA"/>
</dbReference>
<dbReference type="PIR" id="S67078">
    <property type="entry name" value="S67078"/>
</dbReference>
<dbReference type="RefSeq" id="NP_014829.3">
    <property type="nucleotide sequence ID" value="NM_001183605.3"/>
</dbReference>
<dbReference type="BioGRID" id="34581">
    <property type="interactions" value="111"/>
</dbReference>
<dbReference type="FunCoup" id="Q08560">
    <property type="interactions" value="39"/>
</dbReference>
<dbReference type="STRING" id="4932.YOR186W"/>
<dbReference type="GlyGen" id="Q08560">
    <property type="glycosylation" value="3 sites, 1 O-linked glycan (1 site)"/>
</dbReference>
<dbReference type="PaxDb" id="4932-YOR186W"/>
<dbReference type="EnsemblFungi" id="YOR186W_mRNA">
    <property type="protein sequence ID" value="YOR186W"/>
    <property type="gene ID" value="YOR186W"/>
</dbReference>
<dbReference type="GeneID" id="854358"/>
<dbReference type="KEGG" id="sce:YOR186W"/>
<dbReference type="AGR" id="SGD:S000005712"/>
<dbReference type="SGD" id="S000005712">
    <property type="gene designation" value="YOR186W"/>
</dbReference>
<dbReference type="VEuPathDB" id="FungiDB:YOR186W"/>
<dbReference type="HOGENOM" id="CLU_125619_0_0_1"/>
<dbReference type="InParanoid" id="Q08560"/>
<dbReference type="OMA" id="MAFSWFI"/>
<dbReference type="OrthoDB" id="4040107at2759"/>
<dbReference type="BioCyc" id="YEAST:G3O-33696-MONOMER"/>
<dbReference type="BioGRID-ORCS" id="854358">
    <property type="hits" value="0 hits in 10 CRISPR screens"/>
</dbReference>
<dbReference type="PRO" id="PR:Q08560"/>
<dbReference type="Proteomes" id="UP000002311">
    <property type="component" value="Chromosome XV"/>
</dbReference>
<dbReference type="RNAct" id="Q08560">
    <property type="molecule type" value="protein"/>
</dbReference>
<dbReference type="GO" id="GO:0016020">
    <property type="term" value="C:membrane"/>
    <property type="evidence" value="ECO:0007669"/>
    <property type="project" value="UniProtKB-SubCell"/>
</dbReference>
<feature type="chain" id="PRO_0000237662" description="Putative uncharacterized protein YOR186W">
    <location>
        <begin position="1"/>
        <end position="144"/>
    </location>
</feature>
<feature type="transmembrane region" description="Helical" evidence="1">
    <location>
        <begin position="90"/>
        <end position="110"/>
    </location>
</feature>
<feature type="region of interest" description="Disordered" evidence="2">
    <location>
        <begin position="120"/>
        <end position="144"/>
    </location>
</feature>
<feature type="glycosylation site" description="N-linked (GlcNAc...) asparagine" evidence="1">
    <location>
        <position position="14"/>
    </location>
</feature>
<feature type="glycosylation site" description="N-linked (GlcNAc...) asparagine" evidence="1">
    <location>
        <position position="15"/>
    </location>
</feature>
<proteinExistence type="predicted"/>
<keyword id="KW-0325">Glycoprotein</keyword>
<keyword id="KW-0472">Membrane</keyword>
<keyword id="KW-1185">Reference proteome</keyword>
<keyword id="KW-0812">Transmembrane</keyword>
<keyword id="KW-1133">Transmembrane helix</keyword>
<evidence type="ECO:0000255" key="1"/>
<evidence type="ECO:0000256" key="2">
    <source>
        <dbReference type="SAM" id="MobiDB-lite"/>
    </source>
</evidence>
<evidence type="ECO:0000305" key="3"/>
<gene>
    <name type="ordered locus">YOR186W</name>
</gene>
<comment type="subcellular location">
    <subcellularLocation>
        <location evidence="3">Membrane</location>
        <topology evidence="3">Single-pass membrane protein</topology>
    </subcellularLocation>
</comment>
<accession>Q08560</accession>
<accession>D6W2P2</accession>
<sequence length="144" mass="16180">MTLAFTTFAISKINNSSTNEDSKVMILCDEHHPFEKGYFKSAIRAFGNSIKLGLMGNSRPEDAASIFQDKNIPHDLTTEEFRLQLVCMAFSWFIFGLFIACLLLCITLVLTSRYPGENENKATEVVPSSNIDDEEKQLSLSDMI</sequence>